<feature type="chain" id="PRO_1000205827" description="Large ribosomal subunit protein bL34">
    <location>
        <begin position="1"/>
        <end position="44"/>
    </location>
</feature>
<feature type="region of interest" description="Disordered" evidence="2">
    <location>
        <begin position="1"/>
        <end position="26"/>
    </location>
</feature>
<feature type="compositionally biased region" description="Basic residues" evidence="2">
    <location>
        <begin position="7"/>
        <end position="22"/>
    </location>
</feature>
<dbReference type="EMBL" id="CP001107">
    <property type="protein sequence ID" value="ACR77437.1"/>
    <property type="molecule type" value="Genomic_DNA"/>
</dbReference>
<dbReference type="RefSeq" id="WP_012744420.1">
    <property type="nucleotide sequence ID" value="NZ_CAXSYD010000025.1"/>
</dbReference>
<dbReference type="SMR" id="C4ZFN0"/>
<dbReference type="STRING" id="515619.EUBREC_3712"/>
<dbReference type="PaxDb" id="515619-EUBREC_3712"/>
<dbReference type="GeneID" id="86990314"/>
<dbReference type="KEGG" id="ere:EUBREC_3712"/>
<dbReference type="HOGENOM" id="CLU_129938_2_0_9"/>
<dbReference type="Proteomes" id="UP000001477">
    <property type="component" value="Chromosome"/>
</dbReference>
<dbReference type="GO" id="GO:1990904">
    <property type="term" value="C:ribonucleoprotein complex"/>
    <property type="evidence" value="ECO:0007669"/>
    <property type="project" value="UniProtKB-KW"/>
</dbReference>
<dbReference type="GO" id="GO:0005840">
    <property type="term" value="C:ribosome"/>
    <property type="evidence" value="ECO:0007669"/>
    <property type="project" value="UniProtKB-KW"/>
</dbReference>
<dbReference type="GO" id="GO:0003735">
    <property type="term" value="F:structural constituent of ribosome"/>
    <property type="evidence" value="ECO:0007669"/>
    <property type="project" value="InterPro"/>
</dbReference>
<dbReference type="GO" id="GO:0006412">
    <property type="term" value="P:translation"/>
    <property type="evidence" value="ECO:0007669"/>
    <property type="project" value="UniProtKB-UniRule"/>
</dbReference>
<dbReference type="FunFam" id="1.10.287.3980:FF:000001">
    <property type="entry name" value="Mitochondrial ribosomal protein L34"/>
    <property type="match status" value="1"/>
</dbReference>
<dbReference type="Gene3D" id="1.10.287.3980">
    <property type="match status" value="1"/>
</dbReference>
<dbReference type="HAMAP" id="MF_00391">
    <property type="entry name" value="Ribosomal_bL34"/>
    <property type="match status" value="1"/>
</dbReference>
<dbReference type="InterPro" id="IPR000271">
    <property type="entry name" value="Ribosomal_bL34"/>
</dbReference>
<dbReference type="InterPro" id="IPR020939">
    <property type="entry name" value="Ribosomal_bL34_CS"/>
</dbReference>
<dbReference type="NCBIfam" id="TIGR01030">
    <property type="entry name" value="rpmH_bact"/>
    <property type="match status" value="1"/>
</dbReference>
<dbReference type="PANTHER" id="PTHR14503:SF4">
    <property type="entry name" value="LARGE RIBOSOMAL SUBUNIT PROTEIN BL34M"/>
    <property type="match status" value="1"/>
</dbReference>
<dbReference type="PANTHER" id="PTHR14503">
    <property type="entry name" value="MITOCHONDRIAL RIBOSOMAL PROTEIN 34 FAMILY MEMBER"/>
    <property type="match status" value="1"/>
</dbReference>
<dbReference type="Pfam" id="PF00468">
    <property type="entry name" value="Ribosomal_L34"/>
    <property type="match status" value="1"/>
</dbReference>
<dbReference type="PROSITE" id="PS00784">
    <property type="entry name" value="RIBOSOMAL_L34"/>
    <property type="match status" value="1"/>
</dbReference>
<proteinExistence type="inferred from homology"/>
<keyword id="KW-0687">Ribonucleoprotein</keyword>
<keyword id="KW-0689">Ribosomal protein</keyword>
<evidence type="ECO:0000255" key="1">
    <source>
        <dbReference type="HAMAP-Rule" id="MF_00391"/>
    </source>
</evidence>
<evidence type="ECO:0000256" key="2">
    <source>
        <dbReference type="SAM" id="MobiDB-lite"/>
    </source>
</evidence>
<evidence type="ECO:0000305" key="3"/>
<organism>
    <name type="scientific">Agathobacter rectalis (strain ATCC 33656 / DSM 3377 / JCM 17463 / KCTC 5835 / VPI 0990)</name>
    <name type="common">Eubacterium rectale</name>
    <dbReference type="NCBI Taxonomy" id="515619"/>
    <lineage>
        <taxon>Bacteria</taxon>
        <taxon>Bacillati</taxon>
        <taxon>Bacillota</taxon>
        <taxon>Clostridia</taxon>
        <taxon>Lachnospirales</taxon>
        <taxon>Lachnospiraceae</taxon>
        <taxon>Agathobacter</taxon>
    </lineage>
</organism>
<gene>
    <name evidence="1" type="primary">rpmH</name>
    <name type="ordered locus">EUBREC_3712</name>
</gene>
<sequence length="44" mass="5138">MKMTFQPKKRQRAKVHGFRQRMKTAGGRKVIAARRLKGRKKLSA</sequence>
<name>RL34_AGARV</name>
<reference key="1">
    <citation type="journal article" date="2009" name="Proc. Natl. Acad. Sci. U.S.A.">
        <title>Characterizing a model human gut microbiota composed of members of its two dominant bacterial phyla.</title>
        <authorList>
            <person name="Mahowald M.A."/>
            <person name="Rey F.E."/>
            <person name="Seedorf H."/>
            <person name="Turnbaugh P.J."/>
            <person name="Fulton R.S."/>
            <person name="Wollam A."/>
            <person name="Shah N."/>
            <person name="Wang C."/>
            <person name="Magrini V."/>
            <person name="Wilson R.K."/>
            <person name="Cantarel B.L."/>
            <person name="Coutinho P.M."/>
            <person name="Henrissat B."/>
            <person name="Crock L.W."/>
            <person name="Russell A."/>
            <person name="Verberkmoes N.C."/>
            <person name="Hettich R.L."/>
            <person name="Gordon J.I."/>
        </authorList>
    </citation>
    <scope>NUCLEOTIDE SEQUENCE [LARGE SCALE GENOMIC DNA]</scope>
    <source>
        <strain>ATCC 33656 / DSM 3377 / JCM 17463 / KCTC 5835 / LMG 30912 / VPI 0990</strain>
    </source>
</reference>
<accession>C4ZFN0</accession>
<protein>
    <recommendedName>
        <fullName evidence="1">Large ribosomal subunit protein bL34</fullName>
    </recommendedName>
    <alternativeName>
        <fullName evidence="3">50S ribosomal protein L34</fullName>
    </alternativeName>
</protein>
<comment type="similarity">
    <text evidence="1">Belongs to the bacterial ribosomal protein bL34 family.</text>
</comment>